<proteinExistence type="inferred from homology"/>
<evidence type="ECO:0000255" key="1"/>
<evidence type="ECO:0000256" key="2">
    <source>
        <dbReference type="SAM" id="MobiDB-lite"/>
    </source>
</evidence>
<evidence type="ECO:0000305" key="3"/>
<geneLocation type="plasmid">
    <name>sym pNGR234a</name>
</geneLocation>
<name>Y4YR_SINFN</name>
<keyword id="KW-0997">Cell inner membrane</keyword>
<keyword id="KW-1003">Cell membrane</keyword>
<keyword id="KW-0472">Membrane</keyword>
<keyword id="KW-0614">Plasmid</keyword>
<keyword id="KW-1185">Reference proteome</keyword>
<keyword id="KW-0812">Transmembrane</keyword>
<keyword id="KW-1133">Transmembrane helix</keyword>
<keyword id="KW-0813">Transport</keyword>
<gene>
    <name type="ordered locus">NGR_a00530</name>
    <name type="ORF">y4yR</name>
</gene>
<comment type="function">
    <text>Could be involved in the secretion of an unknown factor.</text>
</comment>
<comment type="subcellular location">
    <subcellularLocation>
        <location evidence="3">Cell inner membrane</location>
        <topology evidence="3">Multi-pass membrane protein</topology>
    </subcellularLocation>
</comment>
<comment type="similarity">
    <text evidence="3">Belongs to the FHIPEP (flagella/HR/invasion proteins export pore) family.</text>
</comment>
<feature type="chain" id="PRO_0000190035" description="Probable translocation protein y4yR">
    <location>
        <begin position="1"/>
        <end position="697"/>
    </location>
</feature>
<feature type="transmembrane region" description="Helical" evidence="1">
    <location>
        <begin position="20"/>
        <end position="40"/>
    </location>
</feature>
<feature type="transmembrane region" description="Helical" evidence="1">
    <location>
        <begin position="42"/>
        <end position="62"/>
    </location>
</feature>
<feature type="transmembrane region" description="Helical" evidence="1">
    <location>
        <begin position="67"/>
        <end position="87"/>
    </location>
</feature>
<feature type="transmembrane region" description="Helical" evidence="1">
    <location>
        <begin position="107"/>
        <end position="127"/>
    </location>
</feature>
<feature type="transmembrane region" description="Helical" evidence="1">
    <location>
        <begin position="200"/>
        <end position="220"/>
    </location>
</feature>
<feature type="transmembrane region" description="Helical" evidence="1">
    <location>
        <begin position="235"/>
        <end position="255"/>
    </location>
</feature>
<feature type="transmembrane region" description="Helical" evidence="1">
    <location>
        <begin position="293"/>
        <end position="313"/>
    </location>
</feature>
<feature type="transmembrane region" description="Helical" evidence="1">
    <location>
        <begin position="372"/>
        <end position="392"/>
    </location>
</feature>
<feature type="region of interest" description="Disordered" evidence="2">
    <location>
        <begin position="675"/>
        <end position="697"/>
    </location>
</feature>
<feature type="compositionally biased region" description="Polar residues" evidence="2">
    <location>
        <begin position="680"/>
        <end position="697"/>
    </location>
</feature>
<reference key="1">
    <citation type="journal article" date="1997" name="Nature">
        <title>Molecular basis of symbiosis between Rhizobium and legumes.</title>
        <authorList>
            <person name="Freiberg C.A."/>
            <person name="Fellay R."/>
            <person name="Bairoch A."/>
            <person name="Broughton W.J."/>
            <person name="Rosenthal A."/>
            <person name="Perret X."/>
        </authorList>
    </citation>
    <scope>NUCLEOTIDE SEQUENCE [LARGE SCALE GENOMIC DNA]</scope>
    <source>
        <strain>NBRC 101917 / NGR234</strain>
    </source>
</reference>
<reference key="2">
    <citation type="journal article" date="2009" name="Appl. Environ. Microbiol.">
        <title>Rhizobium sp. strain NGR234 possesses a remarkable number of secretion systems.</title>
        <authorList>
            <person name="Schmeisser C."/>
            <person name="Liesegang H."/>
            <person name="Krysciak D."/>
            <person name="Bakkou N."/>
            <person name="Le Quere A."/>
            <person name="Wollherr A."/>
            <person name="Heinemeyer I."/>
            <person name="Morgenstern B."/>
            <person name="Pommerening-Roeser A."/>
            <person name="Flores M."/>
            <person name="Palacios R."/>
            <person name="Brenner S."/>
            <person name="Gottschalk G."/>
            <person name="Schmitz R.A."/>
            <person name="Broughton W.J."/>
            <person name="Perret X."/>
            <person name="Strittmatter A.W."/>
            <person name="Streit W.R."/>
        </authorList>
    </citation>
    <scope>NUCLEOTIDE SEQUENCE [LARGE SCALE GENOMIC DNA]</scope>
    <source>
        <strain>NBRC 101917 / NGR234</strain>
    </source>
</reference>
<accession>P55726</accession>
<organism>
    <name type="scientific">Sinorhizobium fredii (strain NBRC 101917 / NGR234)</name>
    <dbReference type="NCBI Taxonomy" id="394"/>
    <lineage>
        <taxon>Bacteria</taxon>
        <taxon>Pseudomonadati</taxon>
        <taxon>Pseudomonadota</taxon>
        <taxon>Alphaproteobacteria</taxon>
        <taxon>Hyphomicrobiales</taxon>
        <taxon>Rhizobiaceae</taxon>
        <taxon>Sinorhizobium/Ensifer group</taxon>
        <taxon>Sinorhizobium</taxon>
    </lineage>
</organism>
<protein>
    <recommendedName>
        <fullName>Probable translocation protein y4yR</fullName>
    </recommendedName>
</protein>
<sequence>MANALRRFTEYAPANPDLMVALMLLLAVSMMVMPIPVMAVDALIGFNMGLAVLLLMAALYVSTPLDFSSLPGVILLSTVFRLALTVATTRLILAEGEAGSIIHTFGSFVISGNIVVGFVIFLVVTMVQFMVLAKGAERVAEVAARFTLDALPGKQMAIDAELRNGHIDADESRRRRAALEKESKLYGAMDGAMKFVKGDSIAGLVVICINMLGGISIGLLSKGMSFAQVLHHYTLLTIGDALISQIPALLLSITAATMVTRVTGASKLNLGEDIANQLTASTRALRLAACVLVAMGFVPGFPLPVFFMLAAVFAAASFVKGDVLDADKVDATTVTPAESQTPNVAAQPNPIGVFLAPSLTNAIDQVELRQHIARISQLVSADLGIIVPPIPVDVDQQLPESQFRIDVEGVPVEQDLINPAQLSLADDLKKIESSGIPFRHDPETHRIWVEQSHEPALKAAGIRHHSPSELLAMRVHATLTCHAPRLVGIQETRQLLGRMEQEYSDLVKEVLRTTPIPRIADVLRRLLGEGIPIRNTRLVLEALAEWSEREQNVALLTEHVRSGMKRQICHRYGRHGVLPAFVMERETEDVVRCAVRETAAGPYLALEDRQSEALLSQMRQVFSSTAPGQTRPIVLTSMDVRRFVRGFLTRNGIELAVLSYQDLASDFKIQPVGSIRLPPSNGTSGEPRSIRPSATTG</sequence>
<dbReference type="EMBL" id="U00090">
    <property type="protein sequence ID" value="AAB91957.1"/>
    <property type="molecule type" value="Genomic_DNA"/>
</dbReference>
<dbReference type="RefSeq" id="NP_444170.1">
    <property type="nucleotide sequence ID" value="NC_000914.2"/>
</dbReference>
<dbReference type="RefSeq" id="WP_010875094.1">
    <property type="nucleotide sequence ID" value="NC_000914.2"/>
</dbReference>
<dbReference type="SMR" id="P55726"/>
<dbReference type="KEGG" id="rhi:NGR_a00530"/>
<dbReference type="PATRIC" id="fig|394.7.peg.53"/>
<dbReference type="eggNOG" id="COG4789">
    <property type="taxonomic scope" value="Bacteria"/>
</dbReference>
<dbReference type="HOGENOM" id="CLU_015346_3_0_5"/>
<dbReference type="OrthoDB" id="9759185at2"/>
<dbReference type="Proteomes" id="UP000001054">
    <property type="component" value="Plasmid pNGR234a"/>
</dbReference>
<dbReference type="GO" id="GO:0005886">
    <property type="term" value="C:plasma membrane"/>
    <property type="evidence" value="ECO:0007669"/>
    <property type="project" value="UniProtKB-SubCell"/>
</dbReference>
<dbReference type="GO" id="GO:0009306">
    <property type="term" value="P:protein secretion"/>
    <property type="evidence" value="ECO:0007669"/>
    <property type="project" value="InterPro"/>
</dbReference>
<dbReference type="Gene3D" id="3.40.30.60">
    <property type="entry name" value="FHIPEP family, domain 1"/>
    <property type="match status" value="1"/>
</dbReference>
<dbReference type="Gene3D" id="1.10.8.540">
    <property type="entry name" value="FHIPEP family, domain 3"/>
    <property type="match status" value="1"/>
</dbReference>
<dbReference type="Gene3D" id="3.40.50.12790">
    <property type="entry name" value="FHIPEP family, domain 4"/>
    <property type="match status" value="1"/>
</dbReference>
<dbReference type="InterPro" id="IPR042194">
    <property type="entry name" value="FHIPEP_1"/>
</dbReference>
<dbReference type="InterPro" id="IPR042193">
    <property type="entry name" value="FHIPEP_3"/>
</dbReference>
<dbReference type="InterPro" id="IPR042196">
    <property type="entry name" value="FHIPEP_4"/>
</dbReference>
<dbReference type="InterPro" id="IPR025505">
    <property type="entry name" value="FHIPEP_CS"/>
</dbReference>
<dbReference type="InterPro" id="IPR001712">
    <property type="entry name" value="T3SS_FHIPEP"/>
</dbReference>
<dbReference type="InterPro" id="IPR006302">
    <property type="entry name" value="T3SS_HrcV"/>
</dbReference>
<dbReference type="NCBIfam" id="TIGR01399">
    <property type="entry name" value="hrcV"/>
    <property type="match status" value="1"/>
</dbReference>
<dbReference type="PANTHER" id="PTHR30161">
    <property type="entry name" value="FLAGELLAR EXPORT PROTEIN, MEMBRANE FLHA SUBUNIT-RELATED"/>
    <property type="match status" value="1"/>
</dbReference>
<dbReference type="PANTHER" id="PTHR30161:SF2">
    <property type="entry name" value="INVASION PROTEIN INVA"/>
    <property type="match status" value="1"/>
</dbReference>
<dbReference type="Pfam" id="PF00771">
    <property type="entry name" value="FHIPEP"/>
    <property type="match status" value="1"/>
</dbReference>
<dbReference type="PIRSF" id="PIRSF005419">
    <property type="entry name" value="FlhA"/>
    <property type="match status" value="1"/>
</dbReference>
<dbReference type="PRINTS" id="PR00949">
    <property type="entry name" value="TYPE3IMAPROT"/>
</dbReference>
<dbReference type="PROSITE" id="PS00994">
    <property type="entry name" value="FHIPEP"/>
    <property type="match status" value="1"/>
</dbReference>